<evidence type="ECO:0000255" key="1">
    <source>
        <dbReference type="HAMAP-Rule" id="MF_00391"/>
    </source>
</evidence>
<evidence type="ECO:0000305" key="2"/>
<accession>Q5PKU5</accession>
<dbReference type="EMBL" id="CP000026">
    <property type="protein sequence ID" value="AAV79475.1"/>
    <property type="molecule type" value="Genomic_DNA"/>
</dbReference>
<dbReference type="RefSeq" id="WP_000831330.1">
    <property type="nucleotide sequence ID" value="NC_006511.1"/>
</dbReference>
<dbReference type="SMR" id="Q5PKU5"/>
<dbReference type="GeneID" id="98190980"/>
<dbReference type="KEGG" id="spt:SPA3683"/>
<dbReference type="HOGENOM" id="CLU_129938_2_1_6"/>
<dbReference type="Proteomes" id="UP000008185">
    <property type="component" value="Chromosome"/>
</dbReference>
<dbReference type="GO" id="GO:1990904">
    <property type="term" value="C:ribonucleoprotein complex"/>
    <property type="evidence" value="ECO:0007669"/>
    <property type="project" value="UniProtKB-KW"/>
</dbReference>
<dbReference type="GO" id="GO:0005840">
    <property type="term" value="C:ribosome"/>
    <property type="evidence" value="ECO:0007669"/>
    <property type="project" value="UniProtKB-KW"/>
</dbReference>
<dbReference type="GO" id="GO:0003735">
    <property type="term" value="F:structural constituent of ribosome"/>
    <property type="evidence" value="ECO:0007669"/>
    <property type="project" value="InterPro"/>
</dbReference>
<dbReference type="GO" id="GO:0006412">
    <property type="term" value="P:translation"/>
    <property type="evidence" value="ECO:0007669"/>
    <property type="project" value="UniProtKB-UniRule"/>
</dbReference>
<dbReference type="FunFam" id="1.10.287.3980:FF:000001">
    <property type="entry name" value="Mitochondrial ribosomal protein L34"/>
    <property type="match status" value="1"/>
</dbReference>
<dbReference type="Gene3D" id="1.10.287.3980">
    <property type="match status" value="1"/>
</dbReference>
<dbReference type="HAMAP" id="MF_00391">
    <property type="entry name" value="Ribosomal_bL34"/>
    <property type="match status" value="1"/>
</dbReference>
<dbReference type="InterPro" id="IPR000271">
    <property type="entry name" value="Ribosomal_bL34"/>
</dbReference>
<dbReference type="InterPro" id="IPR020939">
    <property type="entry name" value="Ribosomal_bL34_CS"/>
</dbReference>
<dbReference type="NCBIfam" id="TIGR01030">
    <property type="entry name" value="rpmH_bact"/>
    <property type="match status" value="1"/>
</dbReference>
<dbReference type="PANTHER" id="PTHR14503:SF4">
    <property type="entry name" value="LARGE RIBOSOMAL SUBUNIT PROTEIN BL34M"/>
    <property type="match status" value="1"/>
</dbReference>
<dbReference type="PANTHER" id="PTHR14503">
    <property type="entry name" value="MITOCHONDRIAL RIBOSOMAL PROTEIN 34 FAMILY MEMBER"/>
    <property type="match status" value="1"/>
</dbReference>
<dbReference type="Pfam" id="PF00468">
    <property type="entry name" value="Ribosomal_L34"/>
    <property type="match status" value="1"/>
</dbReference>
<dbReference type="PROSITE" id="PS00784">
    <property type="entry name" value="RIBOSOMAL_L34"/>
    <property type="match status" value="1"/>
</dbReference>
<proteinExistence type="inferred from homology"/>
<feature type="chain" id="PRO_0000187454" description="Large ribosomal subunit protein bL34">
    <location>
        <begin position="1"/>
        <end position="46"/>
    </location>
</feature>
<comment type="similarity">
    <text evidence="1">Belongs to the bacterial ribosomal protein bL34 family.</text>
</comment>
<sequence>MKRTFQPSVLKRNRSHGFRARMATKNGRQVLARRRAKGRARLTVSK</sequence>
<keyword id="KW-0687">Ribonucleoprotein</keyword>
<keyword id="KW-0689">Ribosomal protein</keyword>
<protein>
    <recommendedName>
        <fullName evidence="1">Large ribosomal subunit protein bL34</fullName>
    </recommendedName>
    <alternativeName>
        <fullName evidence="2">50S ribosomal protein L34</fullName>
    </alternativeName>
</protein>
<gene>
    <name evidence="1" type="primary">rpmH</name>
    <name type="ordered locus">SPA3683</name>
</gene>
<reference key="1">
    <citation type="journal article" date="2004" name="Nat. Genet.">
        <title>Comparison of genome degradation in Paratyphi A and Typhi, human-restricted serovars of Salmonella enterica that cause typhoid.</title>
        <authorList>
            <person name="McClelland M."/>
            <person name="Sanderson K.E."/>
            <person name="Clifton S.W."/>
            <person name="Latreille P."/>
            <person name="Porwollik S."/>
            <person name="Sabo A."/>
            <person name="Meyer R."/>
            <person name="Bieri T."/>
            <person name="Ozersky P."/>
            <person name="McLellan M."/>
            <person name="Harkins C.R."/>
            <person name="Wang C."/>
            <person name="Nguyen C."/>
            <person name="Berghoff A."/>
            <person name="Elliott G."/>
            <person name="Kohlberg S."/>
            <person name="Strong C."/>
            <person name="Du F."/>
            <person name="Carter J."/>
            <person name="Kremizki C."/>
            <person name="Layman D."/>
            <person name="Leonard S."/>
            <person name="Sun H."/>
            <person name="Fulton L."/>
            <person name="Nash W."/>
            <person name="Miner T."/>
            <person name="Minx P."/>
            <person name="Delehaunty K."/>
            <person name="Fronick C."/>
            <person name="Magrini V."/>
            <person name="Nhan M."/>
            <person name="Warren W."/>
            <person name="Florea L."/>
            <person name="Spieth J."/>
            <person name="Wilson R.K."/>
        </authorList>
    </citation>
    <scope>NUCLEOTIDE SEQUENCE [LARGE SCALE GENOMIC DNA]</scope>
    <source>
        <strain>ATCC 9150 / SARB42</strain>
    </source>
</reference>
<organism>
    <name type="scientific">Salmonella paratyphi A (strain ATCC 9150 / SARB42)</name>
    <dbReference type="NCBI Taxonomy" id="295319"/>
    <lineage>
        <taxon>Bacteria</taxon>
        <taxon>Pseudomonadati</taxon>
        <taxon>Pseudomonadota</taxon>
        <taxon>Gammaproteobacteria</taxon>
        <taxon>Enterobacterales</taxon>
        <taxon>Enterobacteriaceae</taxon>
        <taxon>Salmonella</taxon>
    </lineage>
</organism>
<name>RL34_SALPA</name>